<proteinExistence type="inferred from homology"/>
<organismHost>
    <name type="scientific">Ornithodoros</name>
    <name type="common">relapsing fever ticks</name>
    <dbReference type="NCBI Taxonomy" id="6937"/>
</organismHost>
<organismHost>
    <name type="scientific">Phacochoerus aethiopicus</name>
    <name type="common">Warthog</name>
    <dbReference type="NCBI Taxonomy" id="85517"/>
</organismHost>
<organismHost>
    <name type="scientific">Phacochoerus africanus</name>
    <name type="common">Warthog</name>
    <dbReference type="NCBI Taxonomy" id="41426"/>
</organismHost>
<organismHost>
    <name type="scientific">Potamochoerus larvatus</name>
    <name type="common">Bushpig</name>
    <dbReference type="NCBI Taxonomy" id="273792"/>
</organismHost>
<organismHost>
    <name type="scientific">Sus scrofa</name>
    <name type="common">Pig</name>
    <dbReference type="NCBI Taxonomy" id="9823"/>
</organismHost>
<accession>P0C8K4</accession>
<name>RPB2_ASFP4</name>
<protein>
    <recommendedName>
        <fullName evidence="2">DNA-directed RNA polymerase RPB2 homolog</fullName>
        <shortName evidence="3">RPB2 homolog</shortName>
        <ecNumber>2.7.7.6</ecNumber>
    </recommendedName>
</protein>
<evidence type="ECO:0000250" key="1">
    <source>
        <dbReference type="UniProtKB" id="P30876"/>
    </source>
</evidence>
<evidence type="ECO:0000250" key="2">
    <source>
        <dbReference type="UniProtKB" id="P42487"/>
    </source>
</evidence>
<evidence type="ECO:0000305" key="3"/>
<gene>
    <name type="ordered locus">Pret-065</name>
</gene>
<dbReference type="EC" id="2.7.7.6"/>
<dbReference type="EMBL" id="AY261363">
    <property type="status" value="NOT_ANNOTATED_CDS"/>
    <property type="molecule type" value="Genomic_DNA"/>
</dbReference>
<dbReference type="SMR" id="P0C8K4"/>
<dbReference type="Proteomes" id="UP000000859">
    <property type="component" value="Segment"/>
</dbReference>
<dbReference type="GO" id="GO:0000428">
    <property type="term" value="C:DNA-directed RNA polymerase complex"/>
    <property type="evidence" value="ECO:0007669"/>
    <property type="project" value="UniProtKB-KW"/>
</dbReference>
<dbReference type="GO" id="GO:0030430">
    <property type="term" value="C:host cell cytoplasm"/>
    <property type="evidence" value="ECO:0007669"/>
    <property type="project" value="UniProtKB-SubCell"/>
</dbReference>
<dbReference type="GO" id="GO:0044423">
    <property type="term" value="C:virion component"/>
    <property type="evidence" value="ECO:0007669"/>
    <property type="project" value="UniProtKB-KW"/>
</dbReference>
<dbReference type="GO" id="GO:0003677">
    <property type="term" value="F:DNA binding"/>
    <property type="evidence" value="ECO:0007669"/>
    <property type="project" value="InterPro"/>
</dbReference>
<dbReference type="GO" id="GO:0003899">
    <property type="term" value="F:DNA-directed RNA polymerase activity"/>
    <property type="evidence" value="ECO:0007669"/>
    <property type="project" value="UniProtKB-EC"/>
</dbReference>
<dbReference type="GO" id="GO:0032549">
    <property type="term" value="F:ribonucleoside binding"/>
    <property type="evidence" value="ECO:0007669"/>
    <property type="project" value="InterPro"/>
</dbReference>
<dbReference type="GO" id="GO:0008270">
    <property type="term" value="F:zinc ion binding"/>
    <property type="evidence" value="ECO:0007669"/>
    <property type="project" value="UniProtKB-KW"/>
</dbReference>
<dbReference type="GO" id="GO:0006351">
    <property type="term" value="P:DNA-templated transcription"/>
    <property type="evidence" value="ECO:0007669"/>
    <property type="project" value="InterPro"/>
</dbReference>
<dbReference type="GO" id="GO:0019083">
    <property type="term" value="P:viral transcription"/>
    <property type="evidence" value="ECO:0007669"/>
    <property type="project" value="UniProtKB-KW"/>
</dbReference>
<dbReference type="Gene3D" id="2.40.50.150">
    <property type="match status" value="1"/>
</dbReference>
<dbReference type="Gene3D" id="3.90.1100.10">
    <property type="match status" value="2"/>
</dbReference>
<dbReference type="Gene3D" id="2.40.270.10">
    <property type="entry name" value="DNA-directed RNA polymerase, subunit 2, domain 6"/>
    <property type="match status" value="1"/>
</dbReference>
<dbReference type="Gene3D" id="3.90.1800.10">
    <property type="entry name" value="RNA polymerase alpha subunit dimerisation domain"/>
    <property type="match status" value="1"/>
</dbReference>
<dbReference type="Gene3D" id="3.90.1110.10">
    <property type="entry name" value="RNA polymerase Rpb2, domain 2"/>
    <property type="match status" value="1"/>
</dbReference>
<dbReference type="InterPro" id="IPR015712">
    <property type="entry name" value="DNA-dir_RNA_pol_su2"/>
</dbReference>
<dbReference type="InterPro" id="IPR007120">
    <property type="entry name" value="DNA-dir_RNAP_su2_dom"/>
</dbReference>
<dbReference type="InterPro" id="IPR037033">
    <property type="entry name" value="DNA-dir_RNAP_su2_hyb_sf"/>
</dbReference>
<dbReference type="InterPro" id="IPR007121">
    <property type="entry name" value="RNA_pol_bsu_CS"/>
</dbReference>
<dbReference type="InterPro" id="IPR007644">
    <property type="entry name" value="RNA_pol_bsu_protrusion"/>
</dbReference>
<dbReference type="InterPro" id="IPR007642">
    <property type="entry name" value="RNA_pol_Rpb2_2"/>
</dbReference>
<dbReference type="InterPro" id="IPR037034">
    <property type="entry name" value="RNA_pol_Rpb2_2_sf"/>
</dbReference>
<dbReference type="InterPro" id="IPR007645">
    <property type="entry name" value="RNA_pol_Rpb2_3"/>
</dbReference>
<dbReference type="InterPro" id="IPR007646">
    <property type="entry name" value="RNA_pol_Rpb2_4"/>
</dbReference>
<dbReference type="InterPro" id="IPR007641">
    <property type="entry name" value="RNA_pol_Rpb2_7"/>
</dbReference>
<dbReference type="InterPro" id="IPR014724">
    <property type="entry name" value="RNA_pol_RPB2_OB-fold"/>
</dbReference>
<dbReference type="PANTHER" id="PTHR20856">
    <property type="entry name" value="DNA-DIRECTED RNA POLYMERASE I SUBUNIT 2"/>
    <property type="match status" value="1"/>
</dbReference>
<dbReference type="Pfam" id="PF04563">
    <property type="entry name" value="RNA_pol_Rpb2_1"/>
    <property type="match status" value="1"/>
</dbReference>
<dbReference type="Pfam" id="PF04561">
    <property type="entry name" value="RNA_pol_Rpb2_2"/>
    <property type="match status" value="1"/>
</dbReference>
<dbReference type="Pfam" id="PF04565">
    <property type="entry name" value="RNA_pol_Rpb2_3"/>
    <property type="match status" value="1"/>
</dbReference>
<dbReference type="Pfam" id="PF04566">
    <property type="entry name" value="RNA_pol_Rpb2_4"/>
    <property type="match status" value="1"/>
</dbReference>
<dbReference type="Pfam" id="PF00562">
    <property type="entry name" value="RNA_pol_Rpb2_6"/>
    <property type="match status" value="1"/>
</dbReference>
<dbReference type="Pfam" id="PF04560">
    <property type="entry name" value="RNA_pol_Rpb2_7"/>
    <property type="match status" value="1"/>
</dbReference>
<dbReference type="SUPFAM" id="SSF64484">
    <property type="entry name" value="beta and beta-prime subunits of DNA dependent RNA-polymerase"/>
    <property type="match status" value="1"/>
</dbReference>
<dbReference type="PROSITE" id="PS01166">
    <property type="entry name" value="RNA_POL_BETA"/>
    <property type="match status" value="1"/>
</dbReference>
<sequence>MEPLRPQITYGPIETVDNEELTEADMLSFISAAVNSTGLIGYNIKSFDDLMDNGIPQIVKQMFNVDITYKDQRDHTEIDKLRESVQIQFNFTDVNIERPQHRNYSQGNKINLLPNKARLCGLSYSGPVNLAAEVILTAHYSNGRQEVKRASIPPFQVSTFPIMRGSNRCHTHHLSKTAKKEIGEDPNEPGGYFIARGGEWVVDLLENIRFNTLHIHYHTMQQGNNEIIRGEFISQPGGAFENSSQIIIRYMTTGAITIEINSTKFSKLRIPWYLIFRMFGMTGDDSIIEQVVFDLESNSLVNTFMIEILEKSIHVLDPIFQPVQHELNREKIIQFLSEKVSKFVSNPSAYKSDENAVQYLNERQLTILDKILLPHMGQTADTRVRKLRFLGLLIHKILLVIMNVFPPTDRDSYRTKRVHGSGVSLAKAFKAIFNTSVIAPIINGFKELLKQTAFEELTQRNIIEAFSAALSKNTASDLNRSMEQSIISGNKTIMVRQRPIVNRVSTQSLERKNLLNTISALRTVNTHNTTNASKQTERADMMRRVHASYPGYICVAQSADTGEKVGMSKQLAITANVCTAGEVLSLKQRLLSDPAIQQLADVSNKDIVRKGLARVFINGEWIGCCTNAFELAQRYRMLRREGKIVHPHTTIYWDSMVDEVEFWLDVGRLTRPLLIVDNNIEKYNQACYKAAEARKKGDKDWEKHKIPFVQNTRFTSQMAKDILAGTLTLEDLVAQGICEFITPEEAENCLVAFSIIELRKHKHDVTRRFTHVDVPQAILGLAALVSPYANCTQPARVTYETNQGRQTGGWYCFSWPYRVDMNRFFQFYNEMPLVKTIAHNYVIPNGLNTIVAYMIYGGYNQEDSVIVSQSFIDRGGFAGTFYREEKVELESDIESFGKPDPLITKNLKPGANYEKLVDGFVPVGTVVKKGDIIIGKVAKIRGEKDELNKYIDRSVMYGFDEPAVVDAVMRPHGPNDEIFGLMRLRYERNLNIGDKMSSRSGNKGIAALALPTSDMPFTEDGLQPDLIVNPHSHPSRMTNGQMIETTVGLANALQGVVTDGTAFLPINVQLLSERLAQEGLRFNGCQKMFNGQTGEYFDAAIFIGPTYHQRLQKFVLDDRYAVASYGPTDALTGQPLDGKRSHGGLRLGEMEHWVLTAQGAMQTIIEKSHDDSDGCISYVCRNCGEPAIYNASHPIYKCMNCDVQADIGMVDSRRSSIVFQHEMRAANVNITSVLSPRVFQPA</sequence>
<comment type="function">
    <text evidence="1">Catalytic component of the DNA-directed RNA polymerase (RNAP) that catalyzes the transcription in the cytoplasm of viral DNA into RNA using the four ribonucleoside triphosphates as substrates (By similarity). Forms the polymerase active center together with RPB1 (By similarity). Part of the core element with the central large cleft, the clamp element that moves to open and close the cleft and the jaws that are thought to grab the incoming DNA template (By similarity).</text>
</comment>
<comment type="catalytic activity">
    <reaction>
        <text>RNA(n) + a ribonucleoside 5'-triphosphate = RNA(n+1) + diphosphate</text>
        <dbReference type="Rhea" id="RHEA:21248"/>
        <dbReference type="Rhea" id="RHEA-COMP:14527"/>
        <dbReference type="Rhea" id="RHEA-COMP:17342"/>
        <dbReference type="ChEBI" id="CHEBI:33019"/>
        <dbReference type="ChEBI" id="CHEBI:61557"/>
        <dbReference type="ChEBI" id="CHEBI:140395"/>
        <dbReference type="EC" id="2.7.7.6"/>
    </reaction>
</comment>
<comment type="subunit">
    <text evidence="2">Part of the viral DNA-directed RNA polymerase that consists of 8 polII-like subunits (RPB1, RPB2, RPB3, RPB5, RPB6, RPB7, RPB9, RPB10), a capping enzyme and a termination factor.</text>
</comment>
<comment type="subcellular location">
    <subcellularLocation>
        <location evidence="3">Host cytoplasm</location>
    </subcellularLocation>
    <subcellularLocation>
        <location evidence="2">Virion</location>
    </subcellularLocation>
    <text evidence="2">Found in association with viral nucleoid.</text>
</comment>
<comment type="induction">
    <text evidence="3">Expressed in the late phase of the viral replicative cycle.</text>
</comment>
<comment type="miscellaneous">
    <text evidence="1">The binding of ribonucleoside triphosphate to the RNA polymerase transcribing complex probably involves a two-step mechanism. The initial binding seems to occur at the entry (E) site and involves a magnesium ion coordinated by three conserved aspartate residues of the two largest RNA Pol subunits.</text>
</comment>
<comment type="similarity">
    <text evidence="3">Belongs to the RNA polymerase beta chain family.</text>
</comment>
<reference key="1">
    <citation type="submission" date="2003-03" db="EMBL/GenBank/DDBJ databases">
        <title>African swine fever virus genomes.</title>
        <authorList>
            <person name="Kutish G.F."/>
            <person name="Rock D.L."/>
        </authorList>
    </citation>
    <scope>NUCLEOTIDE SEQUENCE [LARGE SCALE GENOMIC DNA]</scope>
</reference>
<feature type="chain" id="PRO_0000355627" description="DNA-directed RNA polymerase RPB2 homolog">
    <location>
        <begin position="1"/>
        <end position="1242"/>
    </location>
</feature>
<feature type="zinc finger region" description="C4-type">
    <location>
        <begin position="1180"/>
        <end position="1201"/>
    </location>
</feature>
<keyword id="KW-0240">DNA-directed RNA polymerase</keyword>
<keyword id="KW-1035">Host cytoplasm</keyword>
<keyword id="KW-0426">Late protein</keyword>
<keyword id="KW-0479">Metal-binding</keyword>
<keyword id="KW-0548">Nucleotidyltransferase</keyword>
<keyword id="KW-0804">Transcription</keyword>
<keyword id="KW-0808">Transferase</keyword>
<keyword id="KW-1195">Viral transcription</keyword>
<keyword id="KW-0946">Virion</keyword>
<keyword id="KW-0862">Zinc</keyword>
<keyword id="KW-0863">Zinc-finger</keyword>
<organism>
    <name type="scientific">African swine fever virus (isolate Tick/South Africa/Pretoriuskop Pr4/1996)</name>
    <name type="common">ASFV</name>
    <dbReference type="NCBI Taxonomy" id="561443"/>
    <lineage>
        <taxon>Viruses</taxon>
        <taxon>Varidnaviria</taxon>
        <taxon>Bamfordvirae</taxon>
        <taxon>Nucleocytoviricota</taxon>
        <taxon>Pokkesviricetes</taxon>
        <taxon>Asfuvirales</taxon>
        <taxon>Asfarviridae</taxon>
        <taxon>Asfivirus</taxon>
        <taxon>African swine fever virus</taxon>
    </lineage>
</organism>